<protein>
    <recommendedName>
        <fullName evidence="1">Polyribonucleotide nucleotidyltransferase</fullName>
        <ecNumber evidence="1">2.7.7.8</ecNumber>
    </recommendedName>
    <alternativeName>
        <fullName evidence="1">Polynucleotide phosphorylase</fullName>
        <shortName evidence="1">PNPase</shortName>
    </alternativeName>
</protein>
<gene>
    <name evidence="1" type="primary">pnp</name>
    <name type="ordered locus">syc1666_d</name>
</gene>
<evidence type="ECO:0000255" key="1">
    <source>
        <dbReference type="HAMAP-Rule" id="MF_01595"/>
    </source>
</evidence>
<organism>
    <name type="scientific">Synechococcus sp. (strain ATCC 27144 / PCC 6301 / SAUG 1402/1)</name>
    <name type="common">Anacystis nidulans</name>
    <dbReference type="NCBI Taxonomy" id="269084"/>
    <lineage>
        <taxon>Bacteria</taxon>
        <taxon>Bacillati</taxon>
        <taxon>Cyanobacteriota</taxon>
        <taxon>Cyanophyceae</taxon>
        <taxon>Synechococcales</taxon>
        <taxon>Synechococcaceae</taxon>
        <taxon>Synechococcus</taxon>
    </lineage>
</organism>
<name>PNP_SYNP6</name>
<comment type="function">
    <text evidence="1">Involved in mRNA degradation. Catalyzes the phosphorolysis of single-stranded polyribonucleotides processively in the 3'- to 5'-direction.</text>
</comment>
<comment type="catalytic activity">
    <reaction evidence="1">
        <text>RNA(n+1) + phosphate = RNA(n) + a ribonucleoside 5'-diphosphate</text>
        <dbReference type="Rhea" id="RHEA:22096"/>
        <dbReference type="Rhea" id="RHEA-COMP:14527"/>
        <dbReference type="Rhea" id="RHEA-COMP:17342"/>
        <dbReference type="ChEBI" id="CHEBI:43474"/>
        <dbReference type="ChEBI" id="CHEBI:57930"/>
        <dbReference type="ChEBI" id="CHEBI:140395"/>
        <dbReference type="EC" id="2.7.7.8"/>
    </reaction>
</comment>
<comment type="cofactor">
    <cofactor evidence="1">
        <name>Mg(2+)</name>
        <dbReference type="ChEBI" id="CHEBI:18420"/>
    </cofactor>
</comment>
<comment type="subcellular location">
    <subcellularLocation>
        <location evidence="1">Cytoplasm</location>
    </subcellularLocation>
</comment>
<comment type="similarity">
    <text evidence="1">Belongs to the polyribonucleotide nucleotidyltransferase family.</text>
</comment>
<dbReference type="EC" id="2.7.7.8" evidence="1"/>
<dbReference type="EMBL" id="AP008231">
    <property type="protein sequence ID" value="BAD79856.1"/>
    <property type="molecule type" value="Genomic_DNA"/>
</dbReference>
<dbReference type="RefSeq" id="WP_011243976.1">
    <property type="nucleotide sequence ID" value="NC_006576.1"/>
</dbReference>
<dbReference type="SMR" id="Q5N1G4"/>
<dbReference type="KEGG" id="syc:syc1666_d"/>
<dbReference type="eggNOG" id="COG1185">
    <property type="taxonomic scope" value="Bacteria"/>
</dbReference>
<dbReference type="Proteomes" id="UP000001175">
    <property type="component" value="Chromosome"/>
</dbReference>
<dbReference type="GO" id="GO:0005829">
    <property type="term" value="C:cytosol"/>
    <property type="evidence" value="ECO:0007669"/>
    <property type="project" value="TreeGrafter"/>
</dbReference>
<dbReference type="GO" id="GO:0000175">
    <property type="term" value="F:3'-5'-RNA exonuclease activity"/>
    <property type="evidence" value="ECO:0007669"/>
    <property type="project" value="TreeGrafter"/>
</dbReference>
<dbReference type="GO" id="GO:0000287">
    <property type="term" value="F:magnesium ion binding"/>
    <property type="evidence" value="ECO:0007669"/>
    <property type="project" value="UniProtKB-UniRule"/>
</dbReference>
<dbReference type="GO" id="GO:0004654">
    <property type="term" value="F:polyribonucleotide nucleotidyltransferase activity"/>
    <property type="evidence" value="ECO:0007669"/>
    <property type="project" value="UniProtKB-UniRule"/>
</dbReference>
<dbReference type="GO" id="GO:0003723">
    <property type="term" value="F:RNA binding"/>
    <property type="evidence" value="ECO:0007669"/>
    <property type="project" value="UniProtKB-UniRule"/>
</dbReference>
<dbReference type="GO" id="GO:0006402">
    <property type="term" value="P:mRNA catabolic process"/>
    <property type="evidence" value="ECO:0007669"/>
    <property type="project" value="UniProtKB-UniRule"/>
</dbReference>
<dbReference type="GO" id="GO:0006396">
    <property type="term" value="P:RNA processing"/>
    <property type="evidence" value="ECO:0007669"/>
    <property type="project" value="InterPro"/>
</dbReference>
<dbReference type="CDD" id="cd02393">
    <property type="entry name" value="KH-I_PNPase"/>
    <property type="match status" value="1"/>
</dbReference>
<dbReference type="CDD" id="cd11363">
    <property type="entry name" value="RNase_PH_PNPase_1"/>
    <property type="match status" value="1"/>
</dbReference>
<dbReference type="CDD" id="cd11364">
    <property type="entry name" value="RNase_PH_PNPase_2"/>
    <property type="match status" value="1"/>
</dbReference>
<dbReference type="CDD" id="cd04472">
    <property type="entry name" value="S1_PNPase"/>
    <property type="match status" value="1"/>
</dbReference>
<dbReference type="FunFam" id="2.40.50.140:FF:000023">
    <property type="entry name" value="Polyribonucleotide nucleotidyltransferase"/>
    <property type="match status" value="1"/>
</dbReference>
<dbReference type="FunFam" id="3.30.1370.10:FF:000001">
    <property type="entry name" value="Polyribonucleotide nucleotidyltransferase"/>
    <property type="match status" value="1"/>
</dbReference>
<dbReference type="FunFam" id="3.30.230.70:FF:000001">
    <property type="entry name" value="Polyribonucleotide nucleotidyltransferase"/>
    <property type="match status" value="1"/>
</dbReference>
<dbReference type="FunFam" id="3.30.230.70:FF:000002">
    <property type="entry name" value="Polyribonucleotide nucleotidyltransferase"/>
    <property type="match status" value="1"/>
</dbReference>
<dbReference type="Gene3D" id="3.30.230.70">
    <property type="entry name" value="GHMP Kinase, N-terminal domain"/>
    <property type="match status" value="2"/>
</dbReference>
<dbReference type="Gene3D" id="3.30.1370.10">
    <property type="entry name" value="K Homology domain, type 1"/>
    <property type="match status" value="1"/>
</dbReference>
<dbReference type="Gene3D" id="2.40.50.140">
    <property type="entry name" value="Nucleic acid-binding proteins"/>
    <property type="match status" value="1"/>
</dbReference>
<dbReference type="HAMAP" id="MF_01595">
    <property type="entry name" value="PNPase"/>
    <property type="match status" value="1"/>
</dbReference>
<dbReference type="InterPro" id="IPR001247">
    <property type="entry name" value="ExoRNase_PH_dom1"/>
</dbReference>
<dbReference type="InterPro" id="IPR015847">
    <property type="entry name" value="ExoRNase_PH_dom2"/>
</dbReference>
<dbReference type="InterPro" id="IPR036345">
    <property type="entry name" value="ExoRNase_PH_dom2_sf"/>
</dbReference>
<dbReference type="InterPro" id="IPR004087">
    <property type="entry name" value="KH_dom"/>
</dbReference>
<dbReference type="InterPro" id="IPR004088">
    <property type="entry name" value="KH_dom_type_1"/>
</dbReference>
<dbReference type="InterPro" id="IPR036612">
    <property type="entry name" value="KH_dom_type_1_sf"/>
</dbReference>
<dbReference type="InterPro" id="IPR012340">
    <property type="entry name" value="NA-bd_OB-fold"/>
</dbReference>
<dbReference type="InterPro" id="IPR012162">
    <property type="entry name" value="PNPase"/>
</dbReference>
<dbReference type="InterPro" id="IPR027408">
    <property type="entry name" value="PNPase/RNase_PH_dom_sf"/>
</dbReference>
<dbReference type="InterPro" id="IPR015848">
    <property type="entry name" value="PNPase_PH_RNA-bd_bac/org-type"/>
</dbReference>
<dbReference type="InterPro" id="IPR036456">
    <property type="entry name" value="PNPase_PH_RNA-bd_sf"/>
</dbReference>
<dbReference type="InterPro" id="IPR020568">
    <property type="entry name" value="Ribosomal_Su5_D2-typ_SF"/>
</dbReference>
<dbReference type="InterPro" id="IPR003029">
    <property type="entry name" value="S1_domain"/>
</dbReference>
<dbReference type="NCBIfam" id="TIGR03591">
    <property type="entry name" value="polynuc_phos"/>
    <property type="match status" value="1"/>
</dbReference>
<dbReference type="NCBIfam" id="NF008805">
    <property type="entry name" value="PRK11824.1"/>
    <property type="match status" value="1"/>
</dbReference>
<dbReference type="PANTHER" id="PTHR11252">
    <property type="entry name" value="POLYRIBONUCLEOTIDE NUCLEOTIDYLTRANSFERASE"/>
    <property type="match status" value="1"/>
</dbReference>
<dbReference type="PANTHER" id="PTHR11252:SF0">
    <property type="entry name" value="POLYRIBONUCLEOTIDE NUCLEOTIDYLTRANSFERASE 1, MITOCHONDRIAL"/>
    <property type="match status" value="1"/>
</dbReference>
<dbReference type="Pfam" id="PF00013">
    <property type="entry name" value="KH_1"/>
    <property type="match status" value="1"/>
</dbReference>
<dbReference type="Pfam" id="PF03726">
    <property type="entry name" value="PNPase"/>
    <property type="match status" value="1"/>
</dbReference>
<dbReference type="Pfam" id="PF01138">
    <property type="entry name" value="RNase_PH"/>
    <property type="match status" value="2"/>
</dbReference>
<dbReference type="Pfam" id="PF03725">
    <property type="entry name" value="RNase_PH_C"/>
    <property type="match status" value="1"/>
</dbReference>
<dbReference type="Pfam" id="PF00575">
    <property type="entry name" value="S1"/>
    <property type="match status" value="1"/>
</dbReference>
<dbReference type="PIRSF" id="PIRSF005499">
    <property type="entry name" value="PNPase"/>
    <property type="match status" value="1"/>
</dbReference>
<dbReference type="SMART" id="SM00322">
    <property type="entry name" value="KH"/>
    <property type="match status" value="1"/>
</dbReference>
<dbReference type="SMART" id="SM00316">
    <property type="entry name" value="S1"/>
    <property type="match status" value="1"/>
</dbReference>
<dbReference type="SUPFAM" id="SSF54791">
    <property type="entry name" value="Eukaryotic type KH-domain (KH-domain type I)"/>
    <property type="match status" value="1"/>
</dbReference>
<dbReference type="SUPFAM" id="SSF50249">
    <property type="entry name" value="Nucleic acid-binding proteins"/>
    <property type="match status" value="1"/>
</dbReference>
<dbReference type="SUPFAM" id="SSF46915">
    <property type="entry name" value="Polynucleotide phosphorylase/guanosine pentaphosphate synthase (PNPase/GPSI), domain 3"/>
    <property type="match status" value="1"/>
</dbReference>
<dbReference type="SUPFAM" id="SSF55666">
    <property type="entry name" value="Ribonuclease PH domain 2-like"/>
    <property type="match status" value="2"/>
</dbReference>
<dbReference type="SUPFAM" id="SSF54211">
    <property type="entry name" value="Ribosomal protein S5 domain 2-like"/>
    <property type="match status" value="2"/>
</dbReference>
<dbReference type="PROSITE" id="PS50084">
    <property type="entry name" value="KH_TYPE_1"/>
    <property type="match status" value="1"/>
</dbReference>
<dbReference type="PROSITE" id="PS50126">
    <property type="entry name" value="S1"/>
    <property type="match status" value="1"/>
</dbReference>
<sequence length="716" mass="77165">MPQLSKSLSFDGRDIRLELGLFAPQAGGSVLISSGDTAVLVAATRSTAREGIDFLPLTVDYEERMYAAGRIPGGFLRREGRPPERATLTSRLIDRPLRPLFPSWLRDDLQVVATTLSMDETVPPDVLAATGASIATLVAKIPFYGPMAAVRVGLVGDDFIINPTYREIEKGDLDLVVAGTPAGVIMVEAGANQLPEADVIEAIDFGYEAVQELIKAQQSLLAELGIEQILPEAPNADNTLENFVRDRASSGVQQVLQHFSFTKSERDAALDEVKASVVEAIAALPEEDPVRSVTAAEPKALGNTFKALTKTLMRQQILRDGVRVDGRKLDQVRPISSQVGLLPPRVHGSGLFQRGLTQVLSIATLGTPGDAQELDDLHPDTQKRYLHHYNMPPYSVGETRPMRSPGRREIGHGALAERALLPVLPSKEEFPYVIRVVSEVLSSNGSTSMGSVCGSTLALMDAGVPIKKPVSGAAMGLIREGDEYRVLTDIQGIEDFLGDMDFKVAGTDQGITALQMDMKIHGLPLEIIADAINQAKPARLHILNKMLEAIATPRADLSTYAPRLFRIQINPEQIGLVIGPGGKTIRSITEQTGAKIDIEDTGAVTISAVDADSALRAKSIIEGMTRTITAGDVYIGKVTRIIPIGAFVEFLPGKEGMIHISQIADYRVARVEDELTVGDEVVVKVREIDQKGRVNLTRKGIDPEEVSAARAAVEAS</sequence>
<feature type="chain" id="PRO_0000329895" description="Polyribonucleotide nucleotidyltransferase">
    <location>
        <begin position="1"/>
        <end position="716"/>
    </location>
</feature>
<feature type="domain" description="KH" evidence="1">
    <location>
        <begin position="562"/>
        <end position="621"/>
    </location>
</feature>
<feature type="domain" description="S1 motif" evidence="1">
    <location>
        <begin position="631"/>
        <end position="699"/>
    </location>
</feature>
<feature type="binding site" evidence="1">
    <location>
        <position position="495"/>
    </location>
    <ligand>
        <name>Mg(2+)</name>
        <dbReference type="ChEBI" id="CHEBI:18420"/>
    </ligand>
</feature>
<feature type="binding site" evidence="1">
    <location>
        <position position="501"/>
    </location>
    <ligand>
        <name>Mg(2+)</name>
        <dbReference type="ChEBI" id="CHEBI:18420"/>
    </ligand>
</feature>
<keyword id="KW-0963">Cytoplasm</keyword>
<keyword id="KW-0460">Magnesium</keyword>
<keyword id="KW-0479">Metal-binding</keyword>
<keyword id="KW-0548">Nucleotidyltransferase</keyword>
<keyword id="KW-0694">RNA-binding</keyword>
<keyword id="KW-0808">Transferase</keyword>
<reference key="1">
    <citation type="journal article" date="2007" name="Photosyn. Res.">
        <title>Complete nucleotide sequence of the freshwater unicellular cyanobacterium Synechococcus elongatus PCC 6301 chromosome: gene content and organization.</title>
        <authorList>
            <person name="Sugita C."/>
            <person name="Ogata K."/>
            <person name="Shikata M."/>
            <person name="Jikuya H."/>
            <person name="Takano J."/>
            <person name="Furumichi M."/>
            <person name="Kanehisa M."/>
            <person name="Omata T."/>
            <person name="Sugiura M."/>
            <person name="Sugita M."/>
        </authorList>
    </citation>
    <scope>NUCLEOTIDE SEQUENCE [LARGE SCALE GENOMIC DNA]</scope>
    <source>
        <strain>ATCC 27144 / PCC 6301 / SAUG 1402/1</strain>
    </source>
</reference>
<proteinExistence type="inferred from homology"/>
<accession>Q5N1G4</accession>